<reference key="1">
    <citation type="journal article" date="2002" name="Nat. Biotechnol.">
        <title>Genome sequence of the dissimilatory metal ion-reducing bacterium Shewanella oneidensis.</title>
        <authorList>
            <person name="Heidelberg J.F."/>
            <person name="Paulsen I.T."/>
            <person name="Nelson K.E."/>
            <person name="Gaidos E.J."/>
            <person name="Nelson W.C."/>
            <person name="Read T.D."/>
            <person name="Eisen J.A."/>
            <person name="Seshadri R."/>
            <person name="Ward N.L."/>
            <person name="Methe B.A."/>
            <person name="Clayton R.A."/>
            <person name="Meyer T."/>
            <person name="Tsapin A."/>
            <person name="Scott J."/>
            <person name="Beanan M.J."/>
            <person name="Brinkac L.M."/>
            <person name="Daugherty S.C."/>
            <person name="DeBoy R.T."/>
            <person name="Dodson R.J."/>
            <person name="Durkin A.S."/>
            <person name="Haft D.H."/>
            <person name="Kolonay J.F."/>
            <person name="Madupu R."/>
            <person name="Peterson J.D."/>
            <person name="Umayam L.A."/>
            <person name="White O."/>
            <person name="Wolf A.M."/>
            <person name="Vamathevan J.J."/>
            <person name="Weidman J.F."/>
            <person name="Impraim M."/>
            <person name="Lee K."/>
            <person name="Berry K.J."/>
            <person name="Lee C."/>
            <person name="Mueller J."/>
            <person name="Khouri H.M."/>
            <person name="Gill J."/>
            <person name="Utterback T.R."/>
            <person name="McDonald L.A."/>
            <person name="Feldblyum T.V."/>
            <person name="Smith H.O."/>
            <person name="Venter J.C."/>
            <person name="Nealson K.H."/>
            <person name="Fraser C.M."/>
        </authorList>
    </citation>
    <scope>NUCLEOTIDE SEQUENCE [LARGE SCALE GENOMIC DNA]</scope>
    <source>
        <strain>ATCC 700550 / JCM 31522 / CIP 106686 / LMG 19005 / NCIMB 14063 / MR-1</strain>
    </source>
</reference>
<organism>
    <name type="scientific">Shewanella oneidensis (strain ATCC 700550 / JCM 31522 / CIP 106686 / LMG 19005 / NCIMB 14063 / MR-1)</name>
    <dbReference type="NCBI Taxonomy" id="211586"/>
    <lineage>
        <taxon>Bacteria</taxon>
        <taxon>Pseudomonadati</taxon>
        <taxon>Pseudomonadota</taxon>
        <taxon>Gammaproteobacteria</taxon>
        <taxon>Alteromonadales</taxon>
        <taxon>Shewanellaceae</taxon>
        <taxon>Shewanella</taxon>
    </lineage>
</organism>
<sequence>MSSSELKALLTAPKSVQQAELERINRFLAGLTAQERVLWGLAYLPGNHALSSSFGIQAAVMLHMVSQVQSDIPVILTDTGYLFPETYQFIDQLTERLSLNLKVYQAPITSAWQEARFGQLWEQGVEGLERYNRLNKVEPMQRALAELEVGTWFAGLRRSQSSTREELPILAIHGSRFKLLPIIEWSNKDVHLYLTQFDLPYHPLWEQGYVSVGDTHSSKPLELGMTEEETRFNGLKRECGLHYEI</sequence>
<protein>
    <recommendedName>
        <fullName evidence="1">Phosphoadenosine 5'-phosphosulfate reductase</fullName>
        <shortName evidence="1">PAPS reductase</shortName>
        <ecNumber evidence="1">1.8.4.8</ecNumber>
    </recommendedName>
    <alternativeName>
        <fullName evidence="1">3'-phosphoadenylylsulfate reductase</fullName>
    </alternativeName>
    <alternativeName>
        <fullName evidence="1">PAPS reductase, thioredoxin dependent</fullName>
    </alternativeName>
    <alternativeName>
        <fullName evidence="1">PAPS sulfotransferase</fullName>
    </alternativeName>
    <alternativeName>
        <fullName evidence="1">PAdoPS reductase</fullName>
    </alternativeName>
</protein>
<comment type="function">
    <text evidence="1">Catalyzes the formation of sulfite from phosphoadenosine 5'-phosphosulfate (PAPS) using thioredoxin as an electron donor.</text>
</comment>
<comment type="catalytic activity">
    <reaction evidence="1">
        <text>[thioredoxin]-disulfide + sulfite + adenosine 3',5'-bisphosphate + 2 H(+) = [thioredoxin]-dithiol + 3'-phosphoadenylyl sulfate</text>
        <dbReference type="Rhea" id="RHEA:11724"/>
        <dbReference type="Rhea" id="RHEA-COMP:10698"/>
        <dbReference type="Rhea" id="RHEA-COMP:10700"/>
        <dbReference type="ChEBI" id="CHEBI:15378"/>
        <dbReference type="ChEBI" id="CHEBI:17359"/>
        <dbReference type="ChEBI" id="CHEBI:29950"/>
        <dbReference type="ChEBI" id="CHEBI:50058"/>
        <dbReference type="ChEBI" id="CHEBI:58339"/>
        <dbReference type="ChEBI" id="CHEBI:58343"/>
        <dbReference type="EC" id="1.8.4.8"/>
    </reaction>
</comment>
<comment type="pathway">
    <text evidence="1">Sulfur metabolism; hydrogen sulfide biosynthesis; sulfite from sulfate: step 3/3.</text>
</comment>
<comment type="subcellular location">
    <subcellularLocation>
        <location evidence="1">Cytoplasm</location>
    </subcellularLocation>
</comment>
<comment type="similarity">
    <text evidence="1">Belongs to the PAPS reductase family. CysH subfamily.</text>
</comment>
<comment type="sequence caution" evidence="2">
    <conflict type="erroneous initiation">
        <sequence resource="EMBL-CDS" id="AAN56719"/>
    </conflict>
    <text>Extended N-terminus.</text>
</comment>
<evidence type="ECO:0000255" key="1">
    <source>
        <dbReference type="HAMAP-Rule" id="MF_00063"/>
    </source>
</evidence>
<evidence type="ECO:0000305" key="2"/>
<keyword id="KW-0963">Cytoplasm</keyword>
<keyword id="KW-0560">Oxidoreductase</keyword>
<keyword id="KW-1185">Reference proteome</keyword>
<dbReference type="EC" id="1.8.4.8" evidence="1"/>
<dbReference type="EMBL" id="AE014299">
    <property type="protein sequence ID" value="AAN56719.2"/>
    <property type="status" value="ALT_INIT"/>
    <property type="molecule type" value="Genomic_DNA"/>
</dbReference>
<dbReference type="RefSeq" id="NP_719275.2">
    <property type="nucleotide sequence ID" value="NC_004347.2"/>
</dbReference>
<dbReference type="RefSeq" id="WP_011073519.1">
    <property type="nucleotide sequence ID" value="NZ_CP053946.1"/>
</dbReference>
<dbReference type="SMR" id="Q8EB01"/>
<dbReference type="STRING" id="211586.SO_3736"/>
<dbReference type="PaxDb" id="211586-SO_3736"/>
<dbReference type="KEGG" id="son:SO_3736"/>
<dbReference type="PATRIC" id="fig|211586.12.peg.3619"/>
<dbReference type="eggNOG" id="COG0175">
    <property type="taxonomic scope" value="Bacteria"/>
</dbReference>
<dbReference type="HOGENOM" id="CLU_044089_3_0_6"/>
<dbReference type="OrthoDB" id="9794018at2"/>
<dbReference type="PhylomeDB" id="Q8EB01"/>
<dbReference type="UniPathway" id="UPA00140">
    <property type="reaction ID" value="UER00206"/>
</dbReference>
<dbReference type="Proteomes" id="UP000008186">
    <property type="component" value="Chromosome"/>
</dbReference>
<dbReference type="GO" id="GO:0005737">
    <property type="term" value="C:cytoplasm"/>
    <property type="evidence" value="ECO:0007669"/>
    <property type="project" value="UniProtKB-SubCell"/>
</dbReference>
<dbReference type="GO" id="GO:0004604">
    <property type="term" value="F:phosphoadenylyl-sulfate reductase (thioredoxin) activity"/>
    <property type="evidence" value="ECO:0000318"/>
    <property type="project" value="GO_Central"/>
</dbReference>
<dbReference type="GO" id="GO:0070814">
    <property type="term" value="P:hydrogen sulfide biosynthetic process"/>
    <property type="evidence" value="ECO:0007669"/>
    <property type="project" value="UniProtKB-UniRule"/>
</dbReference>
<dbReference type="GO" id="GO:0019379">
    <property type="term" value="P:sulfate assimilation, phosphoadenylyl sulfate reduction by phosphoadenylyl-sulfate reductase (thioredoxin)"/>
    <property type="evidence" value="ECO:0000318"/>
    <property type="project" value="GO_Central"/>
</dbReference>
<dbReference type="CDD" id="cd23945">
    <property type="entry name" value="PAPS_reductase"/>
    <property type="match status" value="1"/>
</dbReference>
<dbReference type="FunFam" id="3.40.50.620:FF:000043">
    <property type="entry name" value="Phosphoadenosine phosphosulfate reductase"/>
    <property type="match status" value="1"/>
</dbReference>
<dbReference type="Gene3D" id="3.40.50.620">
    <property type="entry name" value="HUPs"/>
    <property type="match status" value="1"/>
</dbReference>
<dbReference type="HAMAP" id="MF_00063">
    <property type="entry name" value="CysH"/>
    <property type="match status" value="1"/>
</dbReference>
<dbReference type="InterPro" id="IPR004511">
    <property type="entry name" value="PAPS/APS_Rdtase"/>
</dbReference>
<dbReference type="InterPro" id="IPR002500">
    <property type="entry name" value="PAPS_reduct_dom"/>
</dbReference>
<dbReference type="InterPro" id="IPR011800">
    <property type="entry name" value="PAPS_reductase_CysH"/>
</dbReference>
<dbReference type="InterPro" id="IPR014729">
    <property type="entry name" value="Rossmann-like_a/b/a_fold"/>
</dbReference>
<dbReference type="NCBIfam" id="TIGR00434">
    <property type="entry name" value="cysH"/>
    <property type="match status" value="1"/>
</dbReference>
<dbReference type="NCBIfam" id="TIGR02057">
    <property type="entry name" value="PAPS_reductase"/>
    <property type="match status" value="1"/>
</dbReference>
<dbReference type="NCBIfam" id="NF002537">
    <property type="entry name" value="PRK02090.1"/>
    <property type="match status" value="1"/>
</dbReference>
<dbReference type="PANTHER" id="PTHR46509">
    <property type="entry name" value="PHOSPHOADENOSINE PHOSPHOSULFATE REDUCTASE"/>
    <property type="match status" value="1"/>
</dbReference>
<dbReference type="PANTHER" id="PTHR46509:SF1">
    <property type="entry name" value="PHOSPHOADENOSINE PHOSPHOSULFATE REDUCTASE"/>
    <property type="match status" value="1"/>
</dbReference>
<dbReference type="Pfam" id="PF01507">
    <property type="entry name" value="PAPS_reduct"/>
    <property type="match status" value="1"/>
</dbReference>
<dbReference type="PIRSF" id="PIRSF000857">
    <property type="entry name" value="PAPS_reductase"/>
    <property type="match status" value="1"/>
</dbReference>
<dbReference type="SUPFAM" id="SSF52402">
    <property type="entry name" value="Adenine nucleotide alpha hydrolases-like"/>
    <property type="match status" value="1"/>
</dbReference>
<gene>
    <name evidence="1" type="primary">cysH</name>
    <name type="ordered locus">SO_3736</name>
</gene>
<name>CYSH_SHEON</name>
<accession>Q8EB01</accession>
<feature type="chain" id="PRO_0000100644" description="Phosphoadenosine 5'-phosphosulfate reductase">
    <location>
        <begin position="1"/>
        <end position="245"/>
    </location>
</feature>
<feature type="active site" description="Nucleophile; cysteine thiosulfonate intermediate" evidence="1">
    <location>
        <position position="239"/>
    </location>
</feature>
<proteinExistence type="inferred from homology"/>